<keyword id="KW-0150">Chloroplast</keyword>
<keyword id="KW-0251">Elongation factor</keyword>
<keyword id="KW-0342">GTP-binding</keyword>
<keyword id="KW-0378">Hydrolase</keyword>
<keyword id="KW-0460">Magnesium</keyword>
<keyword id="KW-0479">Metal-binding</keyword>
<keyword id="KW-0547">Nucleotide-binding</keyword>
<keyword id="KW-0934">Plastid</keyword>
<keyword id="KW-0648">Protein biosynthesis</keyword>
<name>EFTU_TETOB</name>
<proteinExistence type="inferred from homology"/>
<protein>
    <recommendedName>
        <fullName>Elongation factor Tu, chloroplastic</fullName>
        <shortName>EF-Tu</shortName>
        <ecNumber evidence="2">3.6.5.3</ecNumber>
    </recommendedName>
</protein>
<gene>
    <name type="primary">tufA</name>
</gene>
<organism>
    <name type="scientific">Tetradesmus obliquus</name>
    <name type="common">Green alga</name>
    <name type="synonym">Acutodesmus obliquus</name>
    <dbReference type="NCBI Taxonomy" id="3088"/>
    <lineage>
        <taxon>Eukaryota</taxon>
        <taxon>Viridiplantae</taxon>
        <taxon>Chlorophyta</taxon>
        <taxon>core chlorophytes</taxon>
        <taxon>Chlorophyceae</taxon>
        <taxon>CS clade</taxon>
        <taxon>Sphaeropleales</taxon>
        <taxon>Scenedesmaceae</taxon>
        <taxon>Tetradesmus</taxon>
    </lineage>
</organism>
<geneLocation type="chloroplast"/>
<accession>Q1KVS9</accession>
<dbReference type="EC" id="3.6.5.3" evidence="2"/>
<dbReference type="EMBL" id="DQ396875">
    <property type="protein sequence ID" value="ABD48278.1"/>
    <property type="molecule type" value="Genomic_DNA"/>
</dbReference>
<dbReference type="RefSeq" id="YP_635995.1">
    <property type="nucleotide sequence ID" value="NC_008101.1"/>
</dbReference>
<dbReference type="SMR" id="Q1KVS9"/>
<dbReference type="GeneID" id="4099785"/>
<dbReference type="GO" id="GO:0009507">
    <property type="term" value="C:chloroplast"/>
    <property type="evidence" value="ECO:0007669"/>
    <property type="project" value="UniProtKB-SubCell"/>
</dbReference>
<dbReference type="GO" id="GO:0005739">
    <property type="term" value="C:mitochondrion"/>
    <property type="evidence" value="ECO:0007669"/>
    <property type="project" value="TreeGrafter"/>
</dbReference>
<dbReference type="GO" id="GO:0005525">
    <property type="term" value="F:GTP binding"/>
    <property type="evidence" value="ECO:0007669"/>
    <property type="project" value="UniProtKB-UniRule"/>
</dbReference>
<dbReference type="GO" id="GO:0003924">
    <property type="term" value="F:GTPase activity"/>
    <property type="evidence" value="ECO:0007669"/>
    <property type="project" value="InterPro"/>
</dbReference>
<dbReference type="GO" id="GO:0003746">
    <property type="term" value="F:translation elongation factor activity"/>
    <property type="evidence" value="ECO:0007669"/>
    <property type="project" value="UniProtKB-UniRule"/>
</dbReference>
<dbReference type="GO" id="GO:0070125">
    <property type="term" value="P:mitochondrial translational elongation"/>
    <property type="evidence" value="ECO:0007669"/>
    <property type="project" value="TreeGrafter"/>
</dbReference>
<dbReference type="CDD" id="cd01884">
    <property type="entry name" value="EF_Tu"/>
    <property type="match status" value="1"/>
</dbReference>
<dbReference type="CDD" id="cd03697">
    <property type="entry name" value="EFTU_II"/>
    <property type="match status" value="1"/>
</dbReference>
<dbReference type="CDD" id="cd03707">
    <property type="entry name" value="EFTU_III"/>
    <property type="match status" value="1"/>
</dbReference>
<dbReference type="FunFam" id="2.40.30.10:FF:000001">
    <property type="entry name" value="Elongation factor Tu"/>
    <property type="match status" value="1"/>
</dbReference>
<dbReference type="FunFam" id="3.40.50.300:FF:000003">
    <property type="entry name" value="Elongation factor Tu"/>
    <property type="match status" value="1"/>
</dbReference>
<dbReference type="Gene3D" id="3.40.50.300">
    <property type="entry name" value="P-loop containing nucleotide triphosphate hydrolases"/>
    <property type="match status" value="1"/>
</dbReference>
<dbReference type="Gene3D" id="2.40.30.10">
    <property type="entry name" value="Translation factors"/>
    <property type="match status" value="2"/>
</dbReference>
<dbReference type="HAMAP" id="MF_00118_B">
    <property type="entry name" value="EF_Tu_B"/>
    <property type="match status" value="1"/>
</dbReference>
<dbReference type="InterPro" id="IPR041709">
    <property type="entry name" value="EF-Tu_GTP-bd"/>
</dbReference>
<dbReference type="InterPro" id="IPR050055">
    <property type="entry name" value="EF-Tu_GTPase"/>
</dbReference>
<dbReference type="InterPro" id="IPR004161">
    <property type="entry name" value="EFTu-like_2"/>
</dbReference>
<dbReference type="InterPro" id="IPR033720">
    <property type="entry name" value="EFTU_2"/>
</dbReference>
<dbReference type="InterPro" id="IPR031157">
    <property type="entry name" value="G_TR_CS"/>
</dbReference>
<dbReference type="InterPro" id="IPR027417">
    <property type="entry name" value="P-loop_NTPase"/>
</dbReference>
<dbReference type="InterPro" id="IPR005225">
    <property type="entry name" value="Small_GTP-bd"/>
</dbReference>
<dbReference type="InterPro" id="IPR000795">
    <property type="entry name" value="T_Tr_GTP-bd_dom"/>
</dbReference>
<dbReference type="InterPro" id="IPR009000">
    <property type="entry name" value="Transl_B-barrel_sf"/>
</dbReference>
<dbReference type="InterPro" id="IPR009001">
    <property type="entry name" value="Transl_elong_EF1A/Init_IF2_C"/>
</dbReference>
<dbReference type="InterPro" id="IPR004541">
    <property type="entry name" value="Transl_elong_EFTu/EF1A_bac/org"/>
</dbReference>
<dbReference type="InterPro" id="IPR004160">
    <property type="entry name" value="Transl_elong_EFTu/EF1A_C"/>
</dbReference>
<dbReference type="NCBIfam" id="TIGR00485">
    <property type="entry name" value="EF-Tu"/>
    <property type="match status" value="1"/>
</dbReference>
<dbReference type="NCBIfam" id="NF000766">
    <property type="entry name" value="PRK00049.1"/>
    <property type="match status" value="1"/>
</dbReference>
<dbReference type="NCBIfam" id="NF009372">
    <property type="entry name" value="PRK12735.1"/>
    <property type="match status" value="1"/>
</dbReference>
<dbReference type="NCBIfam" id="NF009373">
    <property type="entry name" value="PRK12736.1"/>
    <property type="match status" value="1"/>
</dbReference>
<dbReference type="NCBIfam" id="TIGR00231">
    <property type="entry name" value="small_GTP"/>
    <property type="match status" value="1"/>
</dbReference>
<dbReference type="PANTHER" id="PTHR43721:SF5">
    <property type="entry name" value="ELONGATION FACTOR TU, CHLOROPLASTIC"/>
    <property type="match status" value="1"/>
</dbReference>
<dbReference type="PANTHER" id="PTHR43721">
    <property type="entry name" value="ELONGATION FACTOR TU-RELATED"/>
    <property type="match status" value="1"/>
</dbReference>
<dbReference type="Pfam" id="PF00009">
    <property type="entry name" value="GTP_EFTU"/>
    <property type="match status" value="1"/>
</dbReference>
<dbReference type="Pfam" id="PF03144">
    <property type="entry name" value="GTP_EFTU_D2"/>
    <property type="match status" value="1"/>
</dbReference>
<dbReference type="Pfam" id="PF03143">
    <property type="entry name" value="GTP_EFTU_D3"/>
    <property type="match status" value="1"/>
</dbReference>
<dbReference type="PRINTS" id="PR00315">
    <property type="entry name" value="ELONGATNFCT"/>
</dbReference>
<dbReference type="SUPFAM" id="SSF50465">
    <property type="entry name" value="EF-Tu/eEF-1alpha/eIF2-gamma C-terminal domain"/>
    <property type="match status" value="1"/>
</dbReference>
<dbReference type="SUPFAM" id="SSF52540">
    <property type="entry name" value="P-loop containing nucleoside triphosphate hydrolases"/>
    <property type="match status" value="1"/>
</dbReference>
<dbReference type="SUPFAM" id="SSF50447">
    <property type="entry name" value="Translation proteins"/>
    <property type="match status" value="1"/>
</dbReference>
<dbReference type="PROSITE" id="PS00301">
    <property type="entry name" value="G_TR_1"/>
    <property type="match status" value="1"/>
</dbReference>
<dbReference type="PROSITE" id="PS51722">
    <property type="entry name" value="G_TR_2"/>
    <property type="match status" value="1"/>
</dbReference>
<comment type="function">
    <text evidence="2">GTP hydrolase that promotes the GTP-dependent binding of aminoacyl-tRNA to the A-site of ribosomes during protein biosynthesis.</text>
</comment>
<comment type="catalytic activity">
    <reaction evidence="2">
        <text>GTP + H2O = GDP + phosphate + H(+)</text>
        <dbReference type="Rhea" id="RHEA:19669"/>
        <dbReference type="ChEBI" id="CHEBI:15377"/>
        <dbReference type="ChEBI" id="CHEBI:15378"/>
        <dbReference type="ChEBI" id="CHEBI:37565"/>
        <dbReference type="ChEBI" id="CHEBI:43474"/>
        <dbReference type="ChEBI" id="CHEBI:58189"/>
        <dbReference type="EC" id="3.6.5.3"/>
    </reaction>
    <physiologicalReaction direction="left-to-right" evidence="2">
        <dbReference type="Rhea" id="RHEA:19670"/>
    </physiologicalReaction>
</comment>
<comment type="subcellular location">
    <subcellularLocation>
        <location>Plastid</location>
        <location>Chloroplast</location>
    </subcellularLocation>
</comment>
<comment type="similarity">
    <text evidence="3">Belongs to the TRAFAC class translation factor GTPase superfamily. Classic translation factor GTPase family. EF-Tu/EF-1A subfamily.</text>
</comment>
<sequence>MARAKFERSKPHVNIGTIGHVDHGKTTLTAAITMALAALGGATGKKYDEIDSAPEEKARGITINTAHVEYETPNRHYAHVDCPGHADYVKNMITGAAQMDGAILVVSGADGPMPQTKEHILLAKQVGVPNMVVFLNKEDQVDDAELLELVELEVRETLDKYEFPGDEIPIVSGSALLALEALVENPKIQRGDNKWVDKIFDLMDKVDEYIPTPDRETDKPFLLAVEDVLSITGRGTVATGRVERGTLKVGENVELIGLKDTKATVVTGLEMFKKTLDETMAGDNVGVLLRGIQKKDVERGMVLAKPGSITPHTKFEAQVYVLTKEEGGRHSPFLVGYQPQFFIRTTDVTGKIVSFTHIQMKNPSSVAEEHSNKMAMPGDRIEVTVQLIYPVAVEKGMRFAIREGGRTVGAGVVTNILEE</sequence>
<reference key="1">
    <citation type="journal article" date="2006" name="BMC Evol. Biol.">
        <title>The complete chloroplast genome sequence of the chlorophycean green alga Scenedesmus obliquus reveals a compact gene organization and a biased distribution of genes on the two DNA strands.</title>
        <authorList>
            <person name="de Cambiaire J.-C."/>
            <person name="Otis C."/>
            <person name="Lemieux C."/>
            <person name="Turmel M."/>
        </authorList>
    </citation>
    <scope>NUCLEOTIDE SEQUENCE [LARGE SCALE GENOMIC DNA]</scope>
    <source>
        <strain>UTEX 393</strain>
    </source>
</reference>
<evidence type="ECO:0000250" key="1"/>
<evidence type="ECO:0000255" key="2">
    <source>
        <dbReference type="HAMAP-Rule" id="MF_00118"/>
    </source>
</evidence>
<evidence type="ECO:0000305" key="3"/>
<feature type="chain" id="PRO_0000275380" description="Elongation factor Tu, chloroplastic">
    <location>
        <begin position="1"/>
        <end position="419"/>
    </location>
</feature>
<feature type="domain" description="tr-type G">
    <location>
        <begin position="10"/>
        <end position="214"/>
    </location>
</feature>
<feature type="region of interest" description="G1" evidence="1">
    <location>
        <begin position="19"/>
        <end position="26"/>
    </location>
</feature>
<feature type="region of interest" description="G2" evidence="1">
    <location>
        <begin position="60"/>
        <end position="64"/>
    </location>
</feature>
<feature type="region of interest" description="G3" evidence="1">
    <location>
        <begin position="81"/>
        <end position="84"/>
    </location>
</feature>
<feature type="region of interest" description="G4" evidence="1">
    <location>
        <begin position="136"/>
        <end position="139"/>
    </location>
</feature>
<feature type="region of interest" description="G5" evidence="1">
    <location>
        <begin position="174"/>
        <end position="176"/>
    </location>
</feature>
<feature type="binding site" evidence="1">
    <location>
        <begin position="19"/>
        <end position="26"/>
    </location>
    <ligand>
        <name>GTP</name>
        <dbReference type="ChEBI" id="CHEBI:37565"/>
    </ligand>
</feature>
<feature type="binding site" evidence="2">
    <location>
        <position position="26"/>
    </location>
    <ligand>
        <name>Mg(2+)</name>
        <dbReference type="ChEBI" id="CHEBI:18420"/>
    </ligand>
</feature>
<feature type="binding site" evidence="1">
    <location>
        <begin position="81"/>
        <end position="85"/>
    </location>
    <ligand>
        <name>GTP</name>
        <dbReference type="ChEBI" id="CHEBI:37565"/>
    </ligand>
</feature>
<feature type="binding site" evidence="1">
    <location>
        <begin position="136"/>
        <end position="139"/>
    </location>
    <ligand>
        <name>GTP</name>
        <dbReference type="ChEBI" id="CHEBI:37565"/>
    </ligand>
</feature>